<feature type="signal peptide">
    <location>
        <begin position="1"/>
        <end position="21"/>
    </location>
</feature>
<feature type="chain" id="PRO_0000016562" description="Serine protease inhibitor Kazal-type 2">
    <location>
        <begin position="22"/>
        <end position="81"/>
    </location>
</feature>
<feature type="domain" description="Kazal-like" evidence="4">
    <location>
        <begin position="27"/>
        <end position="81"/>
    </location>
</feature>
<feature type="site" description="Reactive bond" evidence="4">
    <location>
        <begin position="43"/>
        <end position="44"/>
    </location>
</feature>
<feature type="disulfide bond" evidence="4">
    <location>
        <begin position="33"/>
        <end position="63"/>
    </location>
</feature>
<feature type="disulfide bond" evidence="4">
    <location>
        <begin position="41"/>
        <end position="60"/>
    </location>
</feature>
<feature type="disulfide bond" evidence="4">
    <location>
        <begin position="49"/>
        <end position="81"/>
    </location>
</feature>
<accession>P34953</accession>
<name>ISK2_MACFA</name>
<reference key="1">
    <citation type="journal article" date="1993" name="Biochim. Biophys. Acta">
        <title>Sequence analysis of monkey acrosin-trypsin inhibitor transcripts and their abundant expression in the epididymis.</title>
        <authorList>
            <person name="Perry A.C.F."/>
            <person name="Jones R."/>
            <person name="Hall L."/>
        </authorList>
    </citation>
    <scope>NUCLEOTIDE SEQUENCE [MRNA]</scope>
    <scope>TISSUE SPECIFICITY</scope>
    <source>
        <tissue>Epididymis</tissue>
    </source>
</reference>
<organism>
    <name type="scientific">Macaca fascicularis</name>
    <name type="common">Crab-eating macaque</name>
    <name type="synonym">Cynomolgus monkey</name>
    <dbReference type="NCBI Taxonomy" id="9541"/>
    <lineage>
        <taxon>Eukaryota</taxon>
        <taxon>Metazoa</taxon>
        <taxon>Chordata</taxon>
        <taxon>Craniata</taxon>
        <taxon>Vertebrata</taxon>
        <taxon>Euteleostomi</taxon>
        <taxon>Mammalia</taxon>
        <taxon>Eutheria</taxon>
        <taxon>Euarchontoglires</taxon>
        <taxon>Primates</taxon>
        <taxon>Haplorrhini</taxon>
        <taxon>Catarrhini</taxon>
        <taxon>Cercopithecidae</taxon>
        <taxon>Cercopithecinae</taxon>
        <taxon>Macaca</taxon>
    </lineage>
</organism>
<sequence>MALAVLRLALLLLAVTFAGPLFRRFSKYKTPFCARYQLPGCPRDFNPVCGTDMITYPNECTLCMKIRESGQNIKILRRGPC</sequence>
<gene>
    <name type="primary">SPINK2</name>
</gene>
<protein>
    <recommendedName>
        <fullName>Serine protease inhibitor Kazal-type 2</fullName>
    </recommendedName>
    <alternativeName>
        <fullName>Acrosin-trypsin inhibitor</fullName>
    </alternativeName>
</protein>
<evidence type="ECO:0000250" key="1"/>
<evidence type="ECO:0000250" key="2">
    <source>
        <dbReference type="UniProtKB" id="P20155"/>
    </source>
</evidence>
<evidence type="ECO:0000250" key="3">
    <source>
        <dbReference type="UniProtKB" id="Q8BMY7"/>
    </source>
</evidence>
<evidence type="ECO:0000255" key="4">
    <source>
        <dbReference type="PROSITE-ProRule" id="PRU00798"/>
    </source>
</evidence>
<evidence type="ECO:0000269" key="5">
    <source>
    </source>
</evidence>
<proteinExistence type="evidence at transcript level"/>
<keyword id="KW-0968">Cytoplasmic vesicle</keyword>
<keyword id="KW-1015">Disulfide bond</keyword>
<keyword id="KW-0646">Protease inhibitor</keyword>
<keyword id="KW-1185">Reference proteome</keyword>
<keyword id="KW-0964">Secreted</keyword>
<keyword id="KW-0722">Serine protease inhibitor</keyword>
<keyword id="KW-0732">Signal</keyword>
<dbReference type="EMBL" id="X68331">
    <property type="protein sequence ID" value="CAA48408.1"/>
    <property type="molecule type" value="mRNA"/>
</dbReference>
<dbReference type="PIR" id="S29820">
    <property type="entry name" value="S29820"/>
</dbReference>
<dbReference type="RefSeq" id="XP_005555275.1">
    <property type="nucleotide sequence ID" value="XM_005555218.4"/>
</dbReference>
<dbReference type="SMR" id="P34953"/>
<dbReference type="MEROPS" id="I01.012"/>
<dbReference type="GeneID" id="102117158"/>
<dbReference type="KEGG" id="mcf:102117158"/>
<dbReference type="CTD" id="6691"/>
<dbReference type="Proteomes" id="UP000233100">
    <property type="component" value="Unplaced"/>
</dbReference>
<dbReference type="GO" id="GO:0001669">
    <property type="term" value="C:acrosomal vesicle"/>
    <property type="evidence" value="ECO:0000250"/>
    <property type="project" value="UniProtKB"/>
</dbReference>
<dbReference type="GO" id="GO:0005576">
    <property type="term" value="C:extracellular region"/>
    <property type="evidence" value="ECO:0007669"/>
    <property type="project" value="UniProtKB-SubCell"/>
</dbReference>
<dbReference type="GO" id="GO:0004867">
    <property type="term" value="F:serine-type endopeptidase inhibitor activity"/>
    <property type="evidence" value="ECO:0007669"/>
    <property type="project" value="UniProtKB-KW"/>
</dbReference>
<dbReference type="GO" id="GO:0001675">
    <property type="term" value="P:acrosome assembly"/>
    <property type="evidence" value="ECO:0000250"/>
    <property type="project" value="UniProtKB"/>
</dbReference>
<dbReference type="GO" id="GO:0007286">
    <property type="term" value="P:spermatid development"/>
    <property type="evidence" value="ECO:0000250"/>
    <property type="project" value="UniProtKB"/>
</dbReference>
<dbReference type="FunFam" id="3.30.60.30:FF:000031">
    <property type="entry name" value="Serine protease inhibitor Kazal-type 2"/>
    <property type="match status" value="1"/>
</dbReference>
<dbReference type="Gene3D" id="3.30.60.30">
    <property type="match status" value="1"/>
</dbReference>
<dbReference type="InterPro" id="IPR002350">
    <property type="entry name" value="Kazal_dom"/>
</dbReference>
<dbReference type="InterPro" id="IPR036058">
    <property type="entry name" value="Kazal_dom_sf"/>
</dbReference>
<dbReference type="InterPro" id="IPR042167">
    <property type="entry name" value="SPINK2"/>
</dbReference>
<dbReference type="PANTHER" id="PTHR47608:SF1">
    <property type="entry name" value="SERINE PROTEASE INHIBITOR KAZAL-TYPE 2"/>
    <property type="match status" value="1"/>
</dbReference>
<dbReference type="PANTHER" id="PTHR47608">
    <property type="entry name" value="SERINE PROTEASE INHIBITOR KAZAL-TYPE 2, SPINK2"/>
    <property type="match status" value="1"/>
</dbReference>
<dbReference type="Pfam" id="PF00050">
    <property type="entry name" value="Kazal_1"/>
    <property type="match status" value="1"/>
</dbReference>
<dbReference type="SMART" id="SM00280">
    <property type="entry name" value="KAZAL"/>
    <property type="match status" value="1"/>
</dbReference>
<dbReference type="SUPFAM" id="SSF100895">
    <property type="entry name" value="Kazal-type serine protease inhibitors"/>
    <property type="match status" value="1"/>
</dbReference>
<dbReference type="PROSITE" id="PS00282">
    <property type="entry name" value="KAZAL_1"/>
    <property type="match status" value="1"/>
</dbReference>
<dbReference type="PROSITE" id="PS51465">
    <property type="entry name" value="KAZAL_2"/>
    <property type="match status" value="1"/>
</dbReference>
<comment type="function">
    <text evidence="1">Strong inhibitor of acrosin in male and/or female genital tract. Also inhibits trypsin (By similarity).</text>
</comment>
<comment type="function">
    <text evidence="2 3">As a strong inhibitor of acrosin, it is required for normal spermiogenesis. It probably hinders premature activation of proacrosin and other proteases, thus preventing the cascade of events leading to spermiogenesis defects (By similarity). May be involved in the regulation of serine protease-dependent germ cell apoptosis (By similarity). It also inhibits trypsin (By similarity).</text>
</comment>
<comment type="subcellular location">
    <subcellularLocation>
        <location evidence="2">Secreted</location>
    </subcellularLocation>
    <subcellularLocation>
        <location evidence="2">Cytoplasmic vesicle</location>
        <location evidence="2">Secretory vesicle</location>
        <location evidence="2">Acrosome</location>
    </subcellularLocation>
</comment>
<comment type="tissue specificity">
    <text evidence="5">More abundant in epididymis than in testis.</text>
</comment>